<sequence>MAPGRGVLLLICLCLMDNVSQVVCSQNSTTPSKFPTFYSYDCNADTYAPQLTSFSTIWTLLNVLVMTIACVIYLIYMCFNKFVATMTNT</sequence>
<dbReference type="EMBL" id="U20824">
    <property type="protein sequence ID" value="AAC13841.1"/>
    <property type="molecule type" value="Genomic_DNA"/>
</dbReference>
<dbReference type="PIR" id="S55648">
    <property type="entry name" value="S55648"/>
</dbReference>
<dbReference type="SMR" id="Q66655"/>
<dbReference type="KEGG" id="vg:1461050"/>
<dbReference type="Proteomes" id="UP000007083">
    <property type="component" value="Segment"/>
</dbReference>
<dbReference type="GO" id="GO:0044177">
    <property type="term" value="C:host cell Golgi apparatus"/>
    <property type="evidence" value="ECO:0007669"/>
    <property type="project" value="UniProtKB-SubCell"/>
</dbReference>
<dbReference type="GO" id="GO:0033644">
    <property type="term" value="C:host cell membrane"/>
    <property type="evidence" value="ECO:0007669"/>
    <property type="project" value="UniProtKB-SubCell"/>
</dbReference>
<dbReference type="GO" id="GO:0016020">
    <property type="term" value="C:membrane"/>
    <property type="evidence" value="ECO:0007669"/>
    <property type="project" value="UniProtKB-KW"/>
</dbReference>
<dbReference type="GO" id="GO:0019031">
    <property type="term" value="C:viral envelope"/>
    <property type="evidence" value="ECO:0007669"/>
    <property type="project" value="UniProtKB-KW"/>
</dbReference>
<dbReference type="GO" id="GO:0055036">
    <property type="term" value="C:virion membrane"/>
    <property type="evidence" value="ECO:0007669"/>
    <property type="project" value="UniProtKB-SubCell"/>
</dbReference>
<dbReference type="HAMAP" id="MF_04037">
    <property type="entry name" value="HSV_GN"/>
    <property type="match status" value="1"/>
</dbReference>
<dbReference type="InterPro" id="IPR005211">
    <property type="entry name" value="Herpes_glycoprotein_N_domain"/>
</dbReference>
<dbReference type="InterPro" id="IPR034707">
    <property type="entry name" value="HSV_GN"/>
</dbReference>
<dbReference type="Pfam" id="PF03554">
    <property type="entry name" value="Herpes_UL73"/>
    <property type="match status" value="1"/>
</dbReference>
<feature type="signal peptide" evidence="1">
    <location>
        <begin position="1"/>
        <end position="24"/>
    </location>
</feature>
<feature type="chain" id="PRO_0000406056" description="Envelope glycoprotein N" evidence="1">
    <location>
        <begin position="25"/>
        <end position="89"/>
    </location>
</feature>
<feature type="topological domain" description="Virion surface" evidence="1">
    <location>
        <begin position="25"/>
        <end position="56"/>
    </location>
</feature>
<feature type="transmembrane region" description="Helical" evidence="1">
    <location>
        <begin position="57"/>
        <end position="77"/>
    </location>
</feature>
<feature type="topological domain" description="Intravirion" evidence="1">
    <location>
        <begin position="78"/>
        <end position="89"/>
    </location>
</feature>
<feature type="disulfide bond" description="Interchain (with gM)" evidence="1">
    <location>
        <position position="42"/>
    </location>
</feature>
<reference key="1">
    <citation type="journal article" date="1995" name="J. Mol. Biol.">
        <title>The DNA sequence of equine herpesvirus 2.</title>
        <authorList>
            <person name="Telford E.A.R."/>
            <person name="Watson M.S."/>
            <person name="Aird H.C."/>
            <person name="Perry J."/>
            <person name="Davison A.J."/>
        </authorList>
    </citation>
    <scope>NUCLEOTIDE SEQUENCE [LARGE SCALE GENOMIC DNA]</scope>
</reference>
<proteinExistence type="inferred from homology"/>
<name>GN_EHV2</name>
<accession>Q66655</accession>
<organism>
    <name type="scientific">Equine herpesvirus 2 (strain 86/87)</name>
    <name type="common">EHV-2</name>
    <dbReference type="NCBI Taxonomy" id="82831"/>
    <lineage>
        <taxon>Viruses</taxon>
        <taxon>Duplodnaviria</taxon>
        <taxon>Heunggongvirae</taxon>
        <taxon>Peploviricota</taxon>
        <taxon>Herviviricetes</taxon>
        <taxon>Herpesvirales</taxon>
        <taxon>Orthoherpesviridae</taxon>
        <taxon>Gammaherpesvirinae</taxon>
        <taxon>Percavirus</taxon>
        <taxon>Percavirus equidgamma2</taxon>
        <taxon>Equid gammaherpesvirus 2</taxon>
    </lineage>
</organism>
<comment type="function">
    <text evidence="1">Envelope glycoprotein necessary for proper maturation of gM and modulation of its membrane fusion activity. Also plays a critical role in virion morphogenesis.</text>
</comment>
<comment type="subunit">
    <text evidence="1">Interacts (via N-terminus) with gM (via N-terminus). The gM-gN heterodimer forms the gCII complex.</text>
</comment>
<comment type="subcellular location">
    <subcellularLocation>
        <location evidence="1">Virion membrane</location>
        <topology evidence="1">Single-pass type I membrane protein</topology>
    </subcellularLocation>
    <subcellularLocation>
        <location evidence="1">Host membrane</location>
        <topology evidence="1">Single-pass type I membrane protein</topology>
    </subcellularLocation>
    <subcellularLocation>
        <location evidence="1">Host Golgi apparatus</location>
        <location evidence="1">Host trans-Golgi network</location>
    </subcellularLocation>
    <text evidence="1">When coexpressed with gM, localizes in the host trans-Golgi network.</text>
</comment>
<comment type="similarity">
    <text evidence="1">Belongs to the herpesviridae glycoprotein N family.</text>
</comment>
<protein>
    <recommendedName>
        <fullName evidence="1">Envelope glycoprotein N</fullName>
    </recommendedName>
</protein>
<keyword id="KW-1015">Disulfide bond</keyword>
<keyword id="KW-1040">Host Golgi apparatus</keyword>
<keyword id="KW-1043">Host membrane</keyword>
<keyword id="KW-0472">Membrane</keyword>
<keyword id="KW-1185">Reference proteome</keyword>
<keyword id="KW-0732">Signal</keyword>
<keyword id="KW-0812">Transmembrane</keyword>
<keyword id="KW-1133">Transmembrane helix</keyword>
<keyword id="KW-0261">Viral envelope protein</keyword>
<keyword id="KW-0946">Virion</keyword>
<gene>
    <name evidence="1" type="primary">gN</name>
    <name type="synonym">53</name>
</gene>
<organismHost>
    <name type="scientific">Equus caballus</name>
    <name type="common">Horse</name>
    <dbReference type="NCBI Taxonomy" id="9796"/>
</organismHost>
<evidence type="ECO:0000255" key="1">
    <source>
        <dbReference type="HAMAP-Rule" id="MF_04037"/>
    </source>
</evidence>